<proteinExistence type="evidence at protein level"/>
<reference key="1">
    <citation type="journal article" date="2000" name="J. Biochem. Mol. Toxicol.">
        <title>The utilization of alanine, glutamic acid, and serine as amino acid substrates for glycine N-acyltransferase.</title>
        <authorList>
            <person name="van der Westhuizen F.H."/>
            <person name="Pretorius P.J."/>
            <person name="Erasmus E."/>
        </authorList>
    </citation>
    <scope>NUCLEOTIDE SEQUENCE [MRNA] (ISOFORM 2)</scope>
    <scope>VARIANT SER-156</scope>
</reference>
<reference key="2">
    <citation type="journal article" date="2012" name="Biochem. Biophys. Res. Commun.">
        <title>Designation of enzyme activity of glycine-N-acyltransferase family genes and depression of glycine-N-acyltransferase in human hepatocellular carcinoma.</title>
        <authorList>
            <person name="Matsuo M."/>
            <person name="Terai K."/>
            <person name="Kameda N."/>
            <person name="Matsumoto A."/>
            <person name="Kurokawa Y."/>
            <person name="Funase Y."/>
            <person name="Nishikawa K."/>
            <person name="Sugaya N."/>
            <person name="Hiruta N."/>
            <person name="Kishimoto T."/>
        </authorList>
    </citation>
    <scope>NUCLEOTIDE SEQUENCE [MRNA] (ISOFORM 1)</scope>
    <scope>FUNCTION</scope>
    <scope>CATALYTIC ACTIVITY</scope>
    <scope>SUBCELLULAR LOCATION</scope>
    <scope>TISSUE SPECIFICITY</scope>
    <scope>VARIANT SER-156</scope>
</reference>
<reference key="3">
    <citation type="submission" date="2002-09" db="EMBL/GenBank/DDBJ databases">
        <title>Human HRP-1(CLP).</title>
        <authorList>
            <person name="Kishimoto T."/>
            <person name="Niwa S."/>
            <person name="Nishikawa K."/>
        </authorList>
    </citation>
    <scope>NUCLEOTIDE SEQUENCE [MRNA] (ISOFORM 1)</scope>
    <scope>VARIANT SER-156</scope>
</reference>
<reference key="4">
    <citation type="journal article" date="2006" name="Nature">
        <title>Human chromosome 11 DNA sequence and analysis including novel gene identification.</title>
        <authorList>
            <person name="Taylor T.D."/>
            <person name="Noguchi H."/>
            <person name="Totoki Y."/>
            <person name="Toyoda A."/>
            <person name="Kuroki Y."/>
            <person name="Dewar K."/>
            <person name="Lloyd C."/>
            <person name="Itoh T."/>
            <person name="Takeda T."/>
            <person name="Kim D.-W."/>
            <person name="She X."/>
            <person name="Barlow K.F."/>
            <person name="Bloom T."/>
            <person name="Bruford E."/>
            <person name="Chang J.L."/>
            <person name="Cuomo C.A."/>
            <person name="Eichler E."/>
            <person name="FitzGerald M.G."/>
            <person name="Jaffe D.B."/>
            <person name="LaButti K."/>
            <person name="Nicol R."/>
            <person name="Park H.-S."/>
            <person name="Seaman C."/>
            <person name="Sougnez C."/>
            <person name="Yang X."/>
            <person name="Zimmer A.R."/>
            <person name="Zody M.C."/>
            <person name="Birren B.W."/>
            <person name="Nusbaum C."/>
            <person name="Fujiyama A."/>
            <person name="Hattori M."/>
            <person name="Rogers J."/>
            <person name="Lander E.S."/>
            <person name="Sakaki Y."/>
        </authorList>
    </citation>
    <scope>NUCLEOTIDE SEQUENCE [LARGE SCALE GENOMIC DNA]</scope>
</reference>
<reference key="5">
    <citation type="journal article" date="2004" name="Genome Res.">
        <title>The status, quality, and expansion of the NIH full-length cDNA project: the Mammalian Gene Collection (MGC).</title>
        <authorList>
            <consortium name="The MGC Project Team"/>
        </authorList>
    </citation>
    <scope>NUCLEOTIDE SEQUENCE [LARGE SCALE MRNA] (ISOFORM 2)</scope>
    <scope>VARIANTS THR-17 AND SER-156</scope>
    <source>
        <tissue>Kidney</tissue>
    </source>
</reference>
<reference key="6">
    <citation type="submission" date="2004-06" db="EMBL/GenBank/DDBJ databases">
        <title>Cloning of human full open reading frames in Gateway(TM) system entry vector (pDONR201).</title>
        <authorList>
            <person name="Ebert L."/>
            <person name="Schick M."/>
            <person name="Neubert P."/>
            <person name="Schatten R."/>
            <person name="Henze S."/>
            <person name="Korn B."/>
        </authorList>
    </citation>
    <scope>NUCLEOTIDE SEQUENCE [LARGE SCALE MRNA] OF 2-163</scope>
    <scope>VARIANT SER-156</scope>
</reference>
<reference key="7">
    <citation type="journal article" date="1994" name="Biochem. Biophys. Res. Commun.">
        <title>Purification to homogeneity of mitochondrial acyl CoA:glycine N-acyltransferase from human liver.</title>
        <authorList>
            <person name="Mawal Y.R."/>
            <person name="Qureshi I.A."/>
        </authorList>
    </citation>
    <scope>CATALYTIC ACTIVITY</scope>
    <scope>FUNCTION</scope>
    <scope>BIOPHYSICOCHEMICAL PROPERTIES</scope>
</reference>
<reference key="8">
    <citation type="journal article" date="2014" name="J. Proteomics">
        <title>An enzyme assisted RP-RPLC approach for in-depth analysis of human liver phosphoproteome.</title>
        <authorList>
            <person name="Bian Y."/>
            <person name="Song C."/>
            <person name="Cheng K."/>
            <person name="Dong M."/>
            <person name="Wang F."/>
            <person name="Huang J."/>
            <person name="Sun D."/>
            <person name="Wang L."/>
            <person name="Ye M."/>
            <person name="Zou H."/>
        </authorList>
    </citation>
    <scope>IDENTIFICATION BY MASS SPECTROMETRY [LARGE SCALE ANALYSIS]</scope>
    <source>
        <tissue>Liver</tissue>
    </source>
</reference>
<comment type="function">
    <text evidence="4 5">Mitochondrial acyltransferase which transfers an acyl group to the N-terminus of glycine and glutamine, although much less efficiently. Can conjugate numerous substrates to form a variety of N-acylglycines, with a preference for benzoyl-CoA over phenylacetyl-CoA as acyl donors. Thereby detoxify xenobiotics, such as benzoic acid or salicylic acid, and endogenous organic acids, such as isovaleric acid.</text>
</comment>
<comment type="catalytic activity">
    <reaction evidence="10 11">
        <text>an acyl-CoA + glycine = an N-acylglycine + CoA + H(+)</text>
        <dbReference type="Rhea" id="RHEA:19869"/>
        <dbReference type="ChEBI" id="CHEBI:15378"/>
        <dbReference type="ChEBI" id="CHEBI:57287"/>
        <dbReference type="ChEBI" id="CHEBI:57305"/>
        <dbReference type="ChEBI" id="CHEBI:57670"/>
        <dbReference type="ChEBI" id="CHEBI:58342"/>
        <dbReference type="EC" id="2.3.1.13"/>
    </reaction>
</comment>
<comment type="catalytic activity">
    <reaction evidence="10 11">
        <text>benzoyl-CoA + glycine = N-benzoylglycine + CoA + H(+)</text>
        <dbReference type="Rhea" id="RHEA:18493"/>
        <dbReference type="ChEBI" id="CHEBI:15378"/>
        <dbReference type="ChEBI" id="CHEBI:57287"/>
        <dbReference type="ChEBI" id="CHEBI:57305"/>
        <dbReference type="ChEBI" id="CHEBI:57369"/>
        <dbReference type="ChEBI" id="CHEBI:606565"/>
        <dbReference type="EC" id="2.3.1.71"/>
    </reaction>
</comment>
<comment type="biophysicochemical properties">
    <kinetics>
        <KM evidence="5">57.9 mM for benzoyl-CoA</KM>
        <KM evidence="5">83.7 mM for salicyl-CoA</KM>
        <KM evidence="5">124 mM for isovaleryl-CoA</KM>
        <KM evidence="5">198 mM for octanoyl-CoA</KM>
        <Vmax evidence="5">17.1 umol/min/mg enzyme with benzoyl-CoA as substrate</Vmax>
        <Vmax evidence="5">10.1 umol/min/mg enzyme with salicyl-CoA as substrate</Vmax>
        <Vmax evidence="5">7.64 umol/min/mg enzyme with isovaleryl-CoA as substrate</Vmax>
        <Vmax evidence="5">3.3 umol/min/mg enzyme with octanoyl-CoA as substrate</Vmax>
    </kinetics>
</comment>
<comment type="interaction">
    <interactant intactId="EBI-715463">
        <id>Q6IB77</id>
    </interactant>
    <interactant intactId="EBI-10171774">
        <id>P60410</id>
        <label>KRTAP10-8</label>
    </interactant>
    <organismsDiffer>false</organismsDiffer>
    <experiments>3</experiments>
</comment>
<comment type="interaction">
    <interactant intactId="EBI-715463">
        <id>Q6IB77</id>
    </interactant>
    <interactant intactId="EBI-945833">
        <id>Q7Z3S9</id>
        <label>NOTCH2NLA</label>
    </interactant>
    <organismsDiffer>false</organismsDiffer>
    <experiments>3</experiments>
</comment>
<comment type="interaction">
    <interactant intactId="EBI-12142423">
        <id>Q6IB77-2</id>
    </interactant>
    <interactant intactId="EBI-22310682">
        <id>P0DPK4</id>
        <label>NOTCH2NLC</label>
    </interactant>
    <organismsDiffer>false</organismsDiffer>
    <experiments>3</experiments>
</comment>
<comment type="subcellular location">
    <subcellularLocation>
        <location evidence="4">Mitochondrion</location>
    </subcellularLocation>
</comment>
<comment type="alternative products">
    <event type="alternative splicing"/>
    <isoform>
        <id>Q6IB77-1</id>
        <name>1</name>
        <sequence type="displayed"/>
    </isoform>
    <isoform>
        <id>Q6IB77-2</id>
        <name>2</name>
        <sequence type="described" ref="VSP_024073 VSP_024074"/>
    </isoform>
</comment>
<comment type="tissue specificity">
    <text evidence="4">Predominantly expressed in liver (at protein level) and kidney. Down-regulated in hepatocellular carcinoma and other liver cancers.</text>
</comment>
<comment type="similarity">
    <text evidence="12">Belongs to the glycine N-acyltransferase family.</text>
</comment>
<comment type="sequence caution" evidence="12">
    <conflict type="erroneous initiation">
        <sequence resource="EMBL-CDS" id="AAB81453"/>
    </conflict>
    <text>Truncated N-terminus.</text>
</comment>
<comment type="sequence caution" evidence="12">
    <conflict type="erroneous initiation">
        <sequence resource="EMBL-CDS" id="BAL43174"/>
    </conflict>
    <text>Truncated N-terminus.</text>
</comment>
<gene>
    <name type="primary">GLYAT</name>
    <name type="synonym">ACGNAT</name>
    <name type="synonym">CAT</name>
    <name type="synonym">GAT</name>
</gene>
<name>GLYAT_HUMAN</name>
<dbReference type="EC" id="2.3.1.13" evidence="10 11"/>
<dbReference type="EC" id="2.3.1.71" evidence="10 11"/>
<dbReference type="EMBL" id="AF023466">
    <property type="protein sequence ID" value="AAB81453.1"/>
    <property type="status" value="ALT_INIT"/>
    <property type="molecule type" value="mRNA"/>
</dbReference>
<dbReference type="EMBL" id="AB665285">
    <property type="protein sequence ID" value="BAL43174.1"/>
    <property type="status" value="ALT_INIT"/>
    <property type="molecule type" value="mRNA"/>
</dbReference>
<dbReference type="EMBL" id="AB013093">
    <property type="status" value="NOT_ANNOTATED_CDS"/>
    <property type="molecule type" value="mRNA"/>
</dbReference>
<dbReference type="EMBL" id="AP000445">
    <property type="status" value="NOT_ANNOTATED_CDS"/>
    <property type="molecule type" value="Genomic_DNA"/>
</dbReference>
<dbReference type="EMBL" id="BC009785">
    <property type="protein sequence ID" value="AAH09785.1"/>
    <property type="molecule type" value="mRNA"/>
</dbReference>
<dbReference type="EMBL" id="CR456927">
    <property type="protein sequence ID" value="CAG33208.1"/>
    <property type="molecule type" value="mRNA"/>
</dbReference>
<dbReference type="CCDS" id="CCDS7970.1">
    <molecule id="Q6IB77-1"/>
</dbReference>
<dbReference type="CCDS" id="CCDS7971.1">
    <molecule id="Q6IB77-2"/>
</dbReference>
<dbReference type="RefSeq" id="NP_005829.3">
    <molecule id="Q6IB77-2"/>
    <property type="nucleotide sequence ID" value="NM_005838.3"/>
</dbReference>
<dbReference type="RefSeq" id="NP_964011.2">
    <molecule id="Q6IB77-1"/>
    <property type="nucleotide sequence ID" value="NM_201648.3"/>
</dbReference>
<dbReference type="SMR" id="Q6IB77"/>
<dbReference type="BioGRID" id="115543">
    <property type="interactions" value="10"/>
</dbReference>
<dbReference type="FunCoup" id="Q6IB77">
    <property type="interactions" value="30"/>
</dbReference>
<dbReference type="IntAct" id="Q6IB77">
    <property type="interactions" value="7"/>
</dbReference>
<dbReference type="STRING" id="9606.ENSP00000340200"/>
<dbReference type="DrugBank" id="DB00145">
    <property type="generic name" value="Glycine"/>
</dbReference>
<dbReference type="iPTMnet" id="Q6IB77"/>
<dbReference type="PhosphoSitePlus" id="Q6IB77"/>
<dbReference type="BioMuta" id="GLYAT"/>
<dbReference type="DMDM" id="311033446"/>
<dbReference type="jPOST" id="Q6IB77"/>
<dbReference type="MassIVE" id="Q6IB77"/>
<dbReference type="PaxDb" id="9606-ENSP00000484592"/>
<dbReference type="PeptideAtlas" id="Q6IB77"/>
<dbReference type="ProteomicsDB" id="66367">
    <molecule id="Q6IB77-1"/>
</dbReference>
<dbReference type="ProteomicsDB" id="66368">
    <molecule id="Q6IB77-2"/>
</dbReference>
<dbReference type="Antibodypedia" id="27684">
    <property type="antibodies" value="191 antibodies from 25 providers"/>
</dbReference>
<dbReference type="DNASU" id="10249"/>
<dbReference type="Ensembl" id="ENST00000278400.3">
    <molecule id="Q6IB77-2"/>
    <property type="protein sequence ID" value="ENSP00000278400.3"/>
    <property type="gene ID" value="ENSG00000149124.11"/>
</dbReference>
<dbReference type="Ensembl" id="ENST00000344743.8">
    <molecule id="Q6IB77-1"/>
    <property type="protein sequence ID" value="ENSP00000340200.3"/>
    <property type="gene ID" value="ENSG00000149124.11"/>
</dbReference>
<dbReference type="Ensembl" id="ENST00000529732.5">
    <molecule id="Q6IB77-1"/>
    <property type="protein sequence ID" value="ENSP00000431688.1"/>
    <property type="gene ID" value="ENSG00000149124.11"/>
</dbReference>
<dbReference type="Ensembl" id="ENST00000611865.4">
    <molecule id="Q6IB77-1"/>
    <property type="protein sequence ID" value="ENSP00000484592.1"/>
    <property type="gene ID" value="ENSG00000149124.11"/>
</dbReference>
<dbReference type="GeneID" id="10249"/>
<dbReference type="KEGG" id="hsa:10249"/>
<dbReference type="MANE-Select" id="ENST00000344743.8">
    <property type="protein sequence ID" value="ENSP00000340200.3"/>
    <property type="RefSeq nucleotide sequence ID" value="NM_201648.3"/>
    <property type="RefSeq protein sequence ID" value="NP_964011.2"/>
</dbReference>
<dbReference type="UCSC" id="uc001nnb.4">
    <molecule id="Q6IB77-1"/>
    <property type="organism name" value="human"/>
</dbReference>
<dbReference type="AGR" id="HGNC:13734"/>
<dbReference type="CTD" id="10249"/>
<dbReference type="DisGeNET" id="10249"/>
<dbReference type="GeneCards" id="GLYAT"/>
<dbReference type="HGNC" id="HGNC:13734">
    <property type="gene designation" value="GLYAT"/>
</dbReference>
<dbReference type="HPA" id="ENSG00000149124">
    <property type="expression patterns" value="Group enriched (kidney, liver)"/>
</dbReference>
<dbReference type="MIM" id="607424">
    <property type="type" value="gene"/>
</dbReference>
<dbReference type="neXtProt" id="NX_Q6IB77"/>
<dbReference type="OpenTargets" id="ENSG00000149124"/>
<dbReference type="PharmGKB" id="PA28748"/>
<dbReference type="VEuPathDB" id="HostDB:ENSG00000149124"/>
<dbReference type="eggNOG" id="ENOG502SDQB">
    <property type="taxonomic scope" value="Eukaryota"/>
</dbReference>
<dbReference type="GeneTree" id="ENSGT00950000183133"/>
<dbReference type="HOGENOM" id="CLU_060336_0_0_1"/>
<dbReference type="InParanoid" id="Q6IB77"/>
<dbReference type="OMA" id="ERCIQNF"/>
<dbReference type="OrthoDB" id="61870at2759"/>
<dbReference type="PAN-GO" id="Q6IB77">
    <property type="GO annotations" value="4 GO annotations based on evolutionary models"/>
</dbReference>
<dbReference type="PhylomeDB" id="Q6IB77"/>
<dbReference type="TreeFam" id="TF353258"/>
<dbReference type="BRENDA" id="2.3.1.13">
    <property type="organism ID" value="2681"/>
</dbReference>
<dbReference type="BRENDA" id="2.3.1.71">
    <property type="organism ID" value="2681"/>
</dbReference>
<dbReference type="PathwayCommons" id="Q6IB77"/>
<dbReference type="Reactome" id="R-HSA-177128">
    <property type="pathway name" value="Conjugation of salicylate with glycine"/>
</dbReference>
<dbReference type="Reactome" id="R-HSA-177135">
    <property type="pathway name" value="Conjugation of benzoate with glycine"/>
</dbReference>
<dbReference type="Reactome" id="R-HSA-9749641">
    <property type="pathway name" value="Aspirin ADME"/>
</dbReference>
<dbReference type="SABIO-RK" id="Q6IB77"/>
<dbReference type="SignaLink" id="Q6IB77"/>
<dbReference type="BioGRID-ORCS" id="10249">
    <property type="hits" value="7 hits in 1153 CRISPR screens"/>
</dbReference>
<dbReference type="ChiTaRS" id="GLYAT">
    <property type="organism name" value="human"/>
</dbReference>
<dbReference type="GeneWiki" id="GLYAT"/>
<dbReference type="GenomeRNAi" id="10249"/>
<dbReference type="Pharos" id="Q6IB77">
    <property type="development level" value="Tbio"/>
</dbReference>
<dbReference type="PRO" id="PR:Q6IB77"/>
<dbReference type="Proteomes" id="UP000005640">
    <property type="component" value="Chromosome 11"/>
</dbReference>
<dbReference type="RNAct" id="Q6IB77">
    <property type="molecule type" value="protein"/>
</dbReference>
<dbReference type="Bgee" id="ENSG00000149124">
    <property type="expression patterns" value="Expressed in right lobe of liver and 104 other cell types or tissues"/>
</dbReference>
<dbReference type="ExpressionAtlas" id="Q6IB77">
    <property type="expression patterns" value="baseline and differential"/>
</dbReference>
<dbReference type="GO" id="GO:0005759">
    <property type="term" value="C:mitochondrial matrix"/>
    <property type="evidence" value="ECO:0000304"/>
    <property type="project" value="Reactome"/>
</dbReference>
<dbReference type="GO" id="GO:0005739">
    <property type="term" value="C:mitochondrion"/>
    <property type="evidence" value="ECO:0000314"/>
    <property type="project" value="UniProtKB"/>
</dbReference>
<dbReference type="GO" id="GO:0016746">
    <property type="term" value="F:acyltransferase activity"/>
    <property type="evidence" value="ECO:0000304"/>
    <property type="project" value="ProtInc"/>
</dbReference>
<dbReference type="GO" id="GO:0047961">
    <property type="term" value="F:glycine N-acyltransferase activity"/>
    <property type="evidence" value="ECO:0000314"/>
    <property type="project" value="UniProtKB"/>
</dbReference>
<dbReference type="GO" id="GO:0047962">
    <property type="term" value="F:glycine N-benzoyltransferase activity"/>
    <property type="evidence" value="ECO:0000314"/>
    <property type="project" value="UniProtKB"/>
</dbReference>
<dbReference type="GO" id="GO:0006637">
    <property type="term" value="P:acyl-CoA metabolic process"/>
    <property type="evidence" value="ECO:0000304"/>
    <property type="project" value="ProtInc"/>
</dbReference>
<dbReference type="GO" id="GO:1901787">
    <property type="term" value="P:benzoyl-CoA metabolic process"/>
    <property type="evidence" value="ECO:0000314"/>
    <property type="project" value="UniProtKB"/>
</dbReference>
<dbReference type="GO" id="GO:0006544">
    <property type="term" value="P:glycine metabolic process"/>
    <property type="evidence" value="ECO:0000314"/>
    <property type="project" value="UniProtKB"/>
</dbReference>
<dbReference type="GO" id="GO:0032787">
    <property type="term" value="P:monocarboxylic acid metabolic process"/>
    <property type="evidence" value="ECO:0000250"/>
    <property type="project" value="UniProtKB"/>
</dbReference>
<dbReference type="GO" id="GO:0009636">
    <property type="term" value="P:response to toxic substance"/>
    <property type="evidence" value="ECO:0000304"/>
    <property type="project" value="ProtInc"/>
</dbReference>
<dbReference type="GO" id="GO:0006805">
    <property type="term" value="P:xenobiotic metabolic process"/>
    <property type="evidence" value="ECO:0000304"/>
    <property type="project" value="Reactome"/>
</dbReference>
<dbReference type="FunFam" id="3.40.630.30:FF:000075">
    <property type="entry name" value="Glycine N-acyltransferase"/>
    <property type="match status" value="1"/>
</dbReference>
<dbReference type="Gene3D" id="3.40.630.30">
    <property type="match status" value="1"/>
</dbReference>
<dbReference type="InterPro" id="IPR016181">
    <property type="entry name" value="Acyl_CoA_acyltransferase"/>
</dbReference>
<dbReference type="InterPro" id="IPR010313">
    <property type="entry name" value="Glycine_N-acyltransferase"/>
</dbReference>
<dbReference type="InterPro" id="IPR013652">
    <property type="entry name" value="Glycine_N-acyltransferase_C"/>
</dbReference>
<dbReference type="InterPro" id="IPR015938">
    <property type="entry name" value="Glycine_N-acyltransferase_N"/>
</dbReference>
<dbReference type="PANTHER" id="PTHR15298:SF9">
    <property type="entry name" value="GLYCINE N-ACYLTRANSFERASE"/>
    <property type="match status" value="1"/>
</dbReference>
<dbReference type="PANTHER" id="PTHR15298">
    <property type="entry name" value="L-COA N-ACYLTRANSFERASE-RELATED"/>
    <property type="match status" value="1"/>
</dbReference>
<dbReference type="Pfam" id="PF08444">
    <property type="entry name" value="Gly_acyl_tr_C"/>
    <property type="match status" value="1"/>
</dbReference>
<dbReference type="Pfam" id="PF06021">
    <property type="entry name" value="Gly_acyl_tr_N"/>
    <property type="match status" value="1"/>
</dbReference>
<dbReference type="SUPFAM" id="SSF55729">
    <property type="entry name" value="Acyl-CoA N-acyltransferases (Nat)"/>
    <property type="match status" value="1"/>
</dbReference>
<evidence type="ECO:0000250" key="1">
    <source>
        <dbReference type="UniProtKB" id="Q91XE0"/>
    </source>
</evidence>
<evidence type="ECO:0000269" key="2">
    <source>
    </source>
</evidence>
<evidence type="ECO:0000269" key="3">
    <source>
    </source>
</evidence>
<evidence type="ECO:0000269" key="4">
    <source>
    </source>
</evidence>
<evidence type="ECO:0000269" key="5">
    <source>
    </source>
</evidence>
<evidence type="ECO:0000269" key="6">
    <source ref="3"/>
</evidence>
<evidence type="ECO:0000269" key="7">
    <source ref="6"/>
</evidence>
<evidence type="ECO:0000303" key="8">
    <source>
    </source>
</evidence>
<evidence type="ECO:0000303" key="9">
    <source>
    </source>
</evidence>
<evidence type="ECO:0000303" key="10">
    <source>
    </source>
</evidence>
<evidence type="ECO:0000303" key="11">
    <source>
    </source>
</evidence>
<evidence type="ECO:0000305" key="12"/>
<feature type="chain" id="PRO_0000281869" description="Glycine N-acyltransferase">
    <location>
        <begin position="1"/>
        <end position="296"/>
    </location>
</feature>
<feature type="modified residue" description="N6-acetyllysine; alternate" evidence="1">
    <location>
        <position position="16"/>
    </location>
</feature>
<feature type="modified residue" description="N6-succinyllysine; alternate" evidence="1">
    <location>
        <position position="16"/>
    </location>
</feature>
<feature type="modified residue" description="N6-acetyllysine; alternate" evidence="1">
    <location>
        <position position="127"/>
    </location>
</feature>
<feature type="modified residue" description="N6-succinyllysine; alternate" evidence="1">
    <location>
        <position position="127"/>
    </location>
</feature>
<feature type="modified residue" description="N6-acetyllysine; alternate" evidence="1">
    <location>
        <position position="141"/>
    </location>
</feature>
<feature type="modified residue" description="N6-succinyllysine; alternate" evidence="1">
    <location>
        <position position="141"/>
    </location>
</feature>
<feature type="modified residue" description="N6-acetyllysine" evidence="1">
    <location>
        <position position="159"/>
    </location>
</feature>
<feature type="modified residue" description="N6-succinyllysine" evidence="1">
    <location>
        <position position="169"/>
    </location>
</feature>
<feature type="modified residue" description="N6-acetyllysine; alternate" evidence="1">
    <location>
        <position position="183"/>
    </location>
</feature>
<feature type="modified residue" description="N6-succinyllysine; alternate" evidence="1">
    <location>
        <position position="183"/>
    </location>
</feature>
<feature type="modified residue" description="N6-acetyllysine; alternate" evidence="1">
    <location>
        <position position="256"/>
    </location>
</feature>
<feature type="modified residue" description="N6-succinyllysine; alternate" evidence="1">
    <location>
        <position position="256"/>
    </location>
</feature>
<feature type="splice variant" id="VSP_024073" description="In isoform 2." evidence="8 9">
    <original>I</original>
    <variation>M</variation>
    <location>
        <position position="163"/>
    </location>
</feature>
<feature type="splice variant" id="VSP_024074" description="In isoform 2." evidence="8 9">
    <location>
        <begin position="164"/>
        <end position="296"/>
    </location>
</feature>
<feature type="sequence variant" id="VAR_031294" description="In dbSNP:rs10896818." evidence="3">
    <original>S</original>
    <variation>T</variation>
    <location>
        <position position="17"/>
    </location>
</feature>
<feature type="sequence variant" id="VAR_031295" description="In dbSNP:rs675815." evidence="2 3 6 7">
    <original>N</original>
    <variation>S</variation>
    <location>
        <position position="156"/>
    </location>
</feature>
<keyword id="KW-0007">Acetylation</keyword>
<keyword id="KW-0012">Acyltransferase</keyword>
<keyword id="KW-0025">Alternative splicing</keyword>
<keyword id="KW-0216">Detoxification</keyword>
<keyword id="KW-0496">Mitochondrion</keyword>
<keyword id="KW-1267">Proteomics identification</keyword>
<keyword id="KW-1185">Reference proteome</keyword>
<keyword id="KW-0808">Transferase</keyword>
<accession>Q6IB77</accession>
<accession>H1AE11</accession>
<accession>O14833</accession>
<accession>Q96QK7</accession>
<organism>
    <name type="scientific">Homo sapiens</name>
    <name type="common">Human</name>
    <dbReference type="NCBI Taxonomy" id="9606"/>
    <lineage>
        <taxon>Eukaryota</taxon>
        <taxon>Metazoa</taxon>
        <taxon>Chordata</taxon>
        <taxon>Craniata</taxon>
        <taxon>Vertebrata</taxon>
        <taxon>Euteleostomi</taxon>
        <taxon>Mammalia</taxon>
        <taxon>Eutheria</taxon>
        <taxon>Euarchontoglires</taxon>
        <taxon>Primates</taxon>
        <taxon>Haplorrhini</taxon>
        <taxon>Catarrhini</taxon>
        <taxon>Hominidae</taxon>
        <taxon>Homo</taxon>
    </lineage>
</organism>
<sequence length="296" mass="33924">MMLPLQGAQMLQMLEKSLRKSLPASLKVYGTVFHINHGNPFNLKAVVDKWPDFNTVVVCPQEQDMTDDLDHYTNTYQIYSKDPQNCQEFLGSPELINWKQHLQIQSSQPSLNEAIQNLAAIKSFKVKQTQRILYMAAETAKELTPFLLKSKILSPNGGKPKAINQEMFKLSSMDVTHAHLVNKFWHFGGNERSQRFIERCIQTFPTCCLLGPEGTPVCWDLMDQTGEMRMAGTLPEYRLHGLVTYVIYSHAQKLGKLGFPVYSHVDYSNEAMQKMSYTLQHVPIPRSWNQWNCVPL</sequence>
<protein>
    <recommendedName>
        <fullName evidence="8">Glycine N-acyltransferase</fullName>
        <ecNumber evidence="10 11">2.3.1.13</ecNumber>
    </recommendedName>
    <alternativeName>
        <fullName>Acyl-CoA:glycine N-acyltransferase</fullName>
        <shortName>AAc</shortName>
    </alternativeName>
    <alternativeName>
        <fullName>Aralkyl acyl-CoA N-acyltransferase</fullName>
    </alternativeName>
    <alternativeName>
        <fullName>Aralkyl acyl-CoA:amino acid N-acyltransferase</fullName>
    </alternativeName>
    <alternativeName>
        <fullName>Benzoyl-coenzyme A:glycine N-acyltransferase</fullName>
    </alternativeName>
    <alternativeName>
        <fullName>Glycine N-benzoyltransferase</fullName>
        <ecNumber evidence="10 11">2.3.1.71</ecNumber>
    </alternativeName>
    <alternativeName>
        <fullName>HRP-1(CLP)</fullName>
    </alternativeName>
</protein>